<name>IDIA_THEVB</name>
<dbReference type="EMBL" id="BA000039">
    <property type="protein sequence ID" value="BAC08065.1"/>
    <property type="molecule type" value="Genomic_DNA"/>
</dbReference>
<dbReference type="RefSeq" id="NP_681303.1">
    <property type="nucleotide sequence ID" value="NC_004113.1"/>
</dbReference>
<dbReference type="RefSeq" id="WP_011056364.1">
    <property type="nucleotide sequence ID" value="NC_004113.1"/>
</dbReference>
<dbReference type="SMR" id="Q8DLH9"/>
<dbReference type="STRING" id="197221.gene:10747102"/>
<dbReference type="EnsemblBacteria" id="BAC08065">
    <property type="protein sequence ID" value="BAC08065"/>
    <property type="gene ID" value="BAC08065"/>
</dbReference>
<dbReference type="KEGG" id="tel:tll0513"/>
<dbReference type="PATRIC" id="fig|197221.4.peg.541"/>
<dbReference type="eggNOG" id="COG1840">
    <property type="taxonomic scope" value="Bacteria"/>
</dbReference>
<dbReference type="Proteomes" id="UP000000440">
    <property type="component" value="Chromosome"/>
</dbReference>
<dbReference type="GO" id="GO:0030288">
    <property type="term" value="C:outer membrane-bounded periplasmic space"/>
    <property type="evidence" value="ECO:0007669"/>
    <property type="project" value="TreeGrafter"/>
</dbReference>
<dbReference type="GO" id="GO:0031676">
    <property type="term" value="C:plasma membrane-derived thylakoid membrane"/>
    <property type="evidence" value="ECO:0007669"/>
    <property type="project" value="UniProtKB-SubCell"/>
</dbReference>
<dbReference type="GO" id="GO:0046872">
    <property type="term" value="F:metal ion binding"/>
    <property type="evidence" value="ECO:0007669"/>
    <property type="project" value="UniProtKB-KW"/>
</dbReference>
<dbReference type="GO" id="GO:0006826">
    <property type="term" value="P:iron ion transport"/>
    <property type="evidence" value="ECO:0007669"/>
    <property type="project" value="UniProtKB-KW"/>
</dbReference>
<dbReference type="CDD" id="cd13542">
    <property type="entry name" value="PBP2_FutA1_ilke"/>
    <property type="match status" value="1"/>
</dbReference>
<dbReference type="Gene3D" id="3.40.190.10">
    <property type="entry name" value="Periplasmic binding protein-like II"/>
    <property type="match status" value="2"/>
</dbReference>
<dbReference type="InterPro" id="IPR026045">
    <property type="entry name" value="Ferric-bd"/>
</dbReference>
<dbReference type="PANTHER" id="PTHR30006:SF15">
    <property type="entry name" value="IRON-UTILIZATION PERIPLASMIC PROTEIN"/>
    <property type="match status" value="1"/>
</dbReference>
<dbReference type="PANTHER" id="PTHR30006">
    <property type="entry name" value="THIAMINE-BINDING PERIPLASMIC PROTEIN-RELATED"/>
    <property type="match status" value="1"/>
</dbReference>
<dbReference type="Pfam" id="PF13343">
    <property type="entry name" value="SBP_bac_6"/>
    <property type="match status" value="1"/>
</dbReference>
<dbReference type="PIRSF" id="PIRSF002825">
    <property type="entry name" value="CfbpA"/>
    <property type="match status" value="1"/>
</dbReference>
<dbReference type="SUPFAM" id="SSF53850">
    <property type="entry name" value="Periplasmic binding protein-like II"/>
    <property type="match status" value="1"/>
</dbReference>
<keyword id="KW-0406">Ion transport</keyword>
<keyword id="KW-0408">Iron</keyword>
<keyword id="KW-0410">Iron transport</keyword>
<keyword id="KW-0472">Membrane</keyword>
<keyword id="KW-0479">Metal-binding</keyword>
<keyword id="KW-1185">Reference proteome</keyword>
<keyword id="KW-0732">Signal</keyword>
<keyword id="KW-0793">Thylakoid</keyword>
<keyword id="KW-0813">Transport</keyword>
<gene>
    <name type="primary">idiA</name>
    <name type="ordered locus">tll0513</name>
</gene>
<proteinExistence type="evidence at transcript level"/>
<feature type="signal peptide" description="Tat-type signal" evidence="2">
    <location>
        <begin position="1"/>
        <end position="34"/>
    </location>
</feature>
<feature type="chain" id="PRO_0000345608" description="Iron deficiency-induced protein A">
    <location>
        <begin position="35"/>
        <end position="355"/>
    </location>
</feature>
<feature type="binding site" evidence="1">
    <location>
        <position position="49"/>
    </location>
    <ligand>
        <name>Fe cation</name>
        <dbReference type="ChEBI" id="CHEBI:24875"/>
    </ligand>
</feature>
<feature type="binding site" evidence="1">
    <location>
        <position position="50"/>
    </location>
    <ligand>
        <name>Fe cation</name>
        <dbReference type="ChEBI" id="CHEBI:24875"/>
    </ligand>
</feature>
<feature type="binding site" evidence="1">
    <location>
        <position position="180"/>
    </location>
    <ligand>
        <name>Fe cation</name>
        <dbReference type="ChEBI" id="CHEBI:24875"/>
    </ligand>
</feature>
<feature type="binding site" evidence="1">
    <location>
        <position position="236"/>
    </location>
    <ligand>
        <name>Fe cation</name>
        <dbReference type="ChEBI" id="CHEBI:24875"/>
    </ligand>
</feature>
<feature type="binding site" evidence="1">
    <location>
        <position position="237"/>
    </location>
    <ligand>
        <name>Fe cation</name>
        <dbReference type="ChEBI" id="CHEBI:24875"/>
    </ligand>
</feature>
<organism>
    <name type="scientific">Thermosynechococcus vestitus (strain NIES-2133 / IAM M-273 / BP-1)</name>
    <dbReference type="NCBI Taxonomy" id="197221"/>
    <lineage>
        <taxon>Bacteria</taxon>
        <taxon>Bacillati</taxon>
        <taxon>Cyanobacteriota</taxon>
        <taxon>Cyanophyceae</taxon>
        <taxon>Acaryochloridales</taxon>
        <taxon>Thermosynechococcaceae</taxon>
        <taxon>Thermosynechococcus</taxon>
    </lineage>
</organism>
<protein>
    <recommendedName>
        <fullName>Iron deficiency-induced protein A</fullName>
    </recommendedName>
</protein>
<sequence length="355" mass="39281">MEKVGRRVFLGMGAAATAYVTHHLWNQNAESSYAQQSSGGVINVYSARHYDTDKALYNTFTQQTGIRVNIIEAEADALIERIRSEGSRTPADVLITVDAGRLWRAQEAGILQPIQSRVLNSVVPANLREPQGHWFGLSRRVRVLIYNKSRVNPSQLSTYEDLANPKWRRQILTRSSSNIYNQSLTGSLLAIHGAQKTEQWARGLVQNFARPPEGNDTAQIRACAEGVGSVAIANHYYLARLIASDKEQDRAVAAKVGLFFPNQRDRGAHVNISGAGVVAGAPNRQGAIRFLEYLVSPKAQEMFAMANFEYPVRAGVPVHPIVKQFGNFRGQNVNAAVFGRNNAEALRIMDRAGWR</sequence>
<evidence type="ECO:0000250" key="1"/>
<evidence type="ECO:0000255" key="2"/>
<evidence type="ECO:0000269" key="3">
    <source>
    </source>
</evidence>
<evidence type="ECO:0000305" key="4"/>
<accession>Q8DLH9</accession>
<comment type="function">
    <text evidence="1">Plays an important role in protecting the acceptor side of photosystem II (PSII) against oxidative damage, especially under iron-limiting growth conditions.</text>
</comment>
<comment type="function">
    <text evidence="1">May also be part of a periplasmic ABC transporter complex involved in iron import.</text>
</comment>
<comment type="subcellular location">
    <subcellularLocation>
        <location evidence="1">Cellular thylakoid membrane</location>
        <topology evidence="1">Peripheral membrane protein</topology>
        <orientation evidence="1">Lumenal side</orientation>
    </subcellularLocation>
</comment>
<comment type="induction">
    <text evidence="3">By iron limitation and to a smaller extent by manganese limitation.</text>
</comment>
<comment type="PTM">
    <text>Predicted to be exported by the Tat system. The position of the signal peptide cleavage has not been experimentally proven.</text>
</comment>
<comment type="similarity">
    <text evidence="4">Belongs to the bacterial solute-binding protein 1 family.</text>
</comment>
<comment type="caution">
    <text evidence="4">Association with the cytoplasmic side of the thylakoid membrane proposed in PubMed:9599805 is at odds with the subcellular location of orthologs in Synechocystis PCC 6803 and the presence of a signal peptide in this protein.</text>
</comment>
<reference key="1">
    <citation type="journal article" date="2002" name="DNA Res.">
        <title>Complete genome structure of the thermophilic cyanobacterium Thermosynechococcus elongatus BP-1.</title>
        <authorList>
            <person name="Nakamura Y."/>
            <person name="Kaneko T."/>
            <person name="Sato S."/>
            <person name="Ikeuchi M."/>
            <person name="Katoh H."/>
            <person name="Sasamoto S."/>
            <person name="Watanabe A."/>
            <person name="Iriguchi M."/>
            <person name="Kawashima K."/>
            <person name="Kimura T."/>
            <person name="Kishida Y."/>
            <person name="Kiyokawa C."/>
            <person name="Kohara M."/>
            <person name="Matsumoto M."/>
            <person name="Matsuno A."/>
            <person name="Nakazaki N."/>
            <person name="Shimpo S."/>
            <person name="Sugimoto M."/>
            <person name="Takeuchi C."/>
            <person name="Yamada M."/>
            <person name="Tabata S."/>
        </authorList>
    </citation>
    <scope>NUCLEOTIDE SEQUENCE [LARGE SCALE GENOMIC DNA]</scope>
    <source>
        <strain>NIES-2133 / IAM M-273 / BP-1</strain>
    </source>
</reference>
<reference key="2">
    <citation type="journal article" date="1998" name="Planta">
        <title>Immunocytochemical localization of IdiA, a protein expressed under iron or manganese limitation in the mesophilic cyanobacterium Synechococcus PCC 6301 and the thermophilic cyanobacterium Synechococcus elongatus.</title>
        <authorList>
            <person name="Michel K.-P."/>
            <person name="Exss-Sonne P."/>
            <person name="Scholten-Beck G."/>
            <person name="Kahmann U."/>
            <person name="Ruppel H.G."/>
            <person name="Pistorius E.K."/>
        </authorList>
    </citation>
    <scope>SUBCELLULAR LOCATION</scope>
    <scope>INDUCTION</scope>
</reference>